<feature type="chain" id="PRO_0000145511" description="Glyceraldehyde-3-phosphate dehydrogenase 2">
    <location>
        <begin position="1"/>
        <end position="341"/>
    </location>
</feature>
<feature type="active site" description="Nucleophile" evidence="2">
    <location>
        <position position="158"/>
    </location>
</feature>
<feature type="binding site" evidence="1">
    <location>
        <begin position="13"/>
        <end position="14"/>
    </location>
    <ligand>
        <name>NAD(+)</name>
        <dbReference type="ChEBI" id="CHEBI:57540"/>
    </ligand>
</feature>
<feature type="binding site" evidence="1">
    <location>
        <position position="35"/>
    </location>
    <ligand>
        <name>NAD(+)</name>
        <dbReference type="ChEBI" id="CHEBI:57540"/>
    </ligand>
</feature>
<feature type="binding site" evidence="1">
    <location>
        <position position="85"/>
    </location>
    <ligand>
        <name>NAD(+)</name>
        <dbReference type="ChEBI" id="CHEBI:57540"/>
    </ligand>
</feature>
<feature type="binding site" evidence="1">
    <location>
        <begin position="157"/>
        <end position="159"/>
    </location>
    <ligand>
        <name>D-glyceraldehyde 3-phosphate</name>
        <dbReference type="ChEBI" id="CHEBI:59776"/>
    </ligand>
</feature>
<feature type="binding site" evidence="1">
    <location>
        <position position="188"/>
    </location>
    <ligand>
        <name>D-glyceraldehyde 3-phosphate</name>
        <dbReference type="ChEBI" id="CHEBI:59776"/>
    </ligand>
</feature>
<feature type="binding site" evidence="1">
    <location>
        <begin position="217"/>
        <end position="218"/>
    </location>
    <ligand>
        <name>D-glyceraldehyde 3-phosphate</name>
        <dbReference type="ChEBI" id="CHEBI:59776"/>
    </ligand>
</feature>
<feature type="binding site" evidence="1">
    <location>
        <position position="240"/>
    </location>
    <ligand>
        <name>D-glyceraldehyde 3-phosphate</name>
        <dbReference type="ChEBI" id="CHEBI:59776"/>
    </ligand>
</feature>
<feature type="binding site" evidence="1">
    <location>
        <position position="322"/>
    </location>
    <ligand>
        <name>NAD(+)</name>
        <dbReference type="ChEBI" id="CHEBI:57540"/>
    </ligand>
</feature>
<feature type="site" description="Activates thiol group during catalysis" evidence="1">
    <location>
        <position position="185"/>
    </location>
</feature>
<feature type="sequence conflict" description="In Ref. 1; CAA33326." evidence="3" ref="1">
    <original>S</original>
    <variation>N</variation>
    <location>
        <position position="5"/>
    </location>
</feature>
<feature type="sequence conflict" description="In Ref. 1; CAA33326." evidence="3" ref="1">
    <original>V</original>
    <variation>D</variation>
    <location>
        <position position="31"/>
    </location>
</feature>
<keyword id="KW-0963">Cytoplasm</keyword>
<keyword id="KW-0324">Glycolysis</keyword>
<keyword id="KW-0520">NAD</keyword>
<keyword id="KW-0560">Oxidoreductase</keyword>
<keyword id="KW-1185">Reference proteome</keyword>
<dbReference type="EC" id="1.2.1.12"/>
<dbReference type="EMBL" id="X15254">
    <property type="protein sequence ID" value="CAA33326.1"/>
    <property type="molecule type" value="Genomic_DNA"/>
</dbReference>
<dbReference type="EMBL" id="FO080552">
    <property type="protein sequence ID" value="CCD64600.1"/>
    <property type="molecule type" value="Genomic_DNA"/>
</dbReference>
<dbReference type="PIR" id="A89491">
    <property type="entry name" value="A89491"/>
</dbReference>
<dbReference type="PIR" id="S03913">
    <property type="entry name" value="DEKWG2"/>
</dbReference>
<dbReference type="RefSeq" id="NP_001370433.1">
    <property type="nucleotide sequence ID" value="NM_001383540.2"/>
</dbReference>
<dbReference type="RefSeq" id="NP_508535.1">
    <property type="nucleotide sequence ID" value="NM_076134.5"/>
</dbReference>
<dbReference type="SMR" id="P17329"/>
<dbReference type="BioGRID" id="532822">
    <property type="interactions" value="11"/>
</dbReference>
<dbReference type="DIP" id="DIP-26337N"/>
<dbReference type="FunCoup" id="P17329">
    <property type="interactions" value="596"/>
</dbReference>
<dbReference type="IntAct" id="P17329">
    <property type="interactions" value="3"/>
</dbReference>
<dbReference type="MINT" id="P17329"/>
<dbReference type="STRING" id="6239.K10B3.8.2"/>
<dbReference type="iPTMnet" id="P17329"/>
<dbReference type="PaxDb" id="6239-K10B3.8.1"/>
<dbReference type="PeptideAtlas" id="P17329"/>
<dbReference type="EnsemblMetazoa" id="K10B3.8.1">
    <property type="protein sequence ID" value="K10B3.8.1"/>
    <property type="gene ID" value="WBGene00001684"/>
</dbReference>
<dbReference type="GeneID" id="3565504"/>
<dbReference type="UCSC" id="K10B3.8.1">
    <property type="organism name" value="c. elegans"/>
</dbReference>
<dbReference type="AGR" id="WB:WBGene00001684"/>
<dbReference type="WormBase" id="K10B3.8">
    <property type="protein sequence ID" value="CE07371"/>
    <property type="gene ID" value="WBGene00001684"/>
    <property type="gene designation" value="gpd-2"/>
</dbReference>
<dbReference type="eggNOG" id="KOG0657">
    <property type="taxonomic scope" value="Eukaryota"/>
</dbReference>
<dbReference type="GeneTree" id="ENSGT00940000153298"/>
<dbReference type="HOGENOM" id="CLU_030140_0_3_1"/>
<dbReference type="InParanoid" id="P17329"/>
<dbReference type="OMA" id="QCIVEST"/>
<dbReference type="OrthoDB" id="1152826at2759"/>
<dbReference type="PhylomeDB" id="P17329"/>
<dbReference type="Reactome" id="R-CEL-70171">
    <property type="pathway name" value="Glycolysis"/>
</dbReference>
<dbReference type="Reactome" id="R-CEL-70263">
    <property type="pathway name" value="Gluconeogenesis"/>
</dbReference>
<dbReference type="UniPathway" id="UPA00109">
    <property type="reaction ID" value="UER00184"/>
</dbReference>
<dbReference type="PRO" id="PR:P17329"/>
<dbReference type="Proteomes" id="UP000001940">
    <property type="component" value="Chromosome X"/>
</dbReference>
<dbReference type="GO" id="GO:0005829">
    <property type="term" value="C:cytosol"/>
    <property type="evidence" value="ECO:0000318"/>
    <property type="project" value="GO_Central"/>
</dbReference>
<dbReference type="GO" id="GO:0004365">
    <property type="term" value="F:glyceraldehyde-3-phosphate dehydrogenase (NAD+) (phosphorylating) activity"/>
    <property type="evidence" value="ECO:0000318"/>
    <property type="project" value="GO_Central"/>
</dbReference>
<dbReference type="GO" id="GO:0051287">
    <property type="term" value="F:NAD binding"/>
    <property type="evidence" value="ECO:0007669"/>
    <property type="project" value="InterPro"/>
</dbReference>
<dbReference type="GO" id="GO:0050661">
    <property type="term" value="F:NADP binding"/>
    <property type="evidence" value="ECO:0007669"/>
    <property type="project" value="InterPro"/>
</dbReference>
<dbReference type="GO" id="GO:0006006">
    <property type="term" value="P:glucose metabolic process"/>
    <property type="evidence" value="ECO:0007669"/>
    <property type="project" value="InterPro"/>
</dbReference>
<dbReference type="GO" id="GO:0006096">
    <property type="term" value="P:glycolytic process"/>
    <property type="evidence" value="ECO:0000318"/>
    <property type="project" value="GO_Central"/>
</dbReference>
<dbReference type="CDD" id="cd18126">
    <property type="entry name" value="GAPDH_I_C"/>
    <property type="match status" value="1"/>
</dbReference>
<dbReference type="CDD" id="cd05214">
    <property type="entry name" value="GAPDH_I_N"/>
    <property type="match status" value="1"/>
</dbReference>
<dbReference type="FunFam" id="3.30.360.10:FF:000001">
    <property type="entry name" value="Glyceraldehyde-3-phosphate dehydrogenase"/>
    <property type="match status" value="1"/>
</dbReference>
<dbReference type="FunFam" id="3.40.50.720:FF:000266">
    <property type="entry name" value="Glyceraldehyde-3-phosphate dehydrogenase"/>
    <property type="match status" value="1"/>
</dbReference>
<dbReference type="Gene3D" id="3.30.360.10">
    <property type="entry name" value="Dihydrodipicolinate Reductase, domain 2"/>
    <property type="match status" value="1"/>
</dbReference>
<dbReference type="Gene3D" id="3.40.50.720">
    <property type="entry name" value="NAD(P)-binding Rossmann-like Domain"/>
    <property type="match status" value="1"/>
</dbReference>
<dbReference type="InterPro" id="IPR020831">
    <property type="entry name" value="GlycerAld/Erythrose_P_DH"/>
</dbReference>
<dbReference type="InterPro" id="IPR020830">
    <property type="entry name" value="GlycerAld_3-P_DH_AS"/>
</dbReference>
<dbReference type="InterPro" id="IPR020829">
    <property type="entry name" value="GlycerAld_3-P_DH_cat"/>
</dbReference>
<dbReference type="InterPro" id="IPR020828">
    <property type="entry name" value="GlycerAld_3-P_DH_NAD(P)-bd"/>
</dbReference>
<dbReference type="InterPro" id="IPR006424">
    <property type="entry name" value="Glyceraldehyde-3-P_DH_1"/>
</dbReference>
<dbReference type="InterPro" id="IPR036291">
    <property type="entry name" value="NAD(P)-bd_dom_sf"/>
</dbReference>
<dbReference type="NCBIfam" id="TIGR01534">
    <property type="entry name" value="GAPDH-I"/>
    <property type="match status" value="1"/>
</dbReference>
<dbReference type="PANTHER" id="PTHR10836">
    <property type="entry name" value="GLYCERALDEHYDE 3-PHOSPHATE DEHYDROGENASE"/>
    <property type="match status" value="1"/>
</dbReference>
<dbReference type="PANTHER" id="PTHR10836:SF76">
    <property type="entry name" value="GLYCERALDEHYDE-3-PHOSPHATE DEHYDROGENASE-RELATED"/>
    <property type="match status" value="1"/>
</dbReference>
<dbReference type="Pfam" id="PF02800">
    <property type="entry name" value="Gp_dh_C"/>
    <property type="match status" value="1"/>
</dbReference>
<dbReference type="Pfam" id="PF00044">
    <property type="entry name" value="Gp_dh_N"/>
    <property type="match status" value="1"/>
</dbReference>
<dbReference type="PIRSF" id="PIRSF000149">
    <property type="entry name" value="GAP_DH"/>
    <property type="match status" value="1"/>
</dbReference>
<dbReference type="PRINTS" id="PR00078">
    <property type="entry name" value="G3PDHDRGNASE"/>
</dbReference>
<dbReference type="SMART" id="SM00846">
    <property type="entry name" value="Gp_dh_N"/>
    <property type="match status" value="1"/>
</dbReference>
<dbReference type="SUPFAM" id="SSF55347">
    <property type="entry name" value="Glyceraldehyde-3-phosphate dehydrogenase-like, C-terminal domain"/>
    <property type="match status" value="1"/>
</dbReference>
<dbReference type="SUPFAM" id="SSF51735">
    <property type="entry name" value="NAD(P)-binding Rossmann-fold domains"/>
    <property type="match status" value="1"/>
</dbReference>
<dbReference type="PROSITE" id="PS00071">
    <property type="entry name" value="GAPDH"/>
    <property type="match status" value="1"/>
</dbReference>
<accession>P17329</accession>
<evidence type="ECO:0000250" key="1"/>
<evidence type="ECO:0000255" key="2">
    <source>
        <dbReference type="PROSITE-ProRule" id="PRU10009"/>
    </source>
</evidence>
<evidence type="ECO:0000305" key="3"/>
<comment type="catalytic activity">
    <reaction evidence="2">
        <text>D-glyceraldehyde 3-phosphate + phosphate + NAD(+) = (2R)-3-phospho-glyceroyl phosphate + NADH + H(+)</text>
        <dbReference type="Rhea" id="RHEA:10300"/>
        <dbReference type="ChEBI" id="CHEBI:15378"/>
        <dbReference type="ChEBI" id="CHEBI:43474"/>
        <dbReference type="ChEBI" id="CHEBI:57540"/>
        <dbReference type="ChEBI" id="CHEBI:57604"/>
        <dbReference type="ChEBI" id="CHEBI:57945"/>
        <dbReference type="ChEBI" id="CHEBI:59776"/>
        <dbReference type="EC" id="1.2.1.12"/>
    </reaction>
</comment>
<comment type="pathway">
    <text>Carbohydrate degradation; glycolysis; pyruvate from D-glyceraldehyde 3-phosphate: step 1/5.</text>
</comment>
<comment type="subunit">
    <text>Homotetramer.</text>
</comment>
<comment type="subcellular location">
    <subcellularLocation>
        <location>Cytoplasm</location>
    </subcellularLocation>
</comment>
<comment type="miscellaneous">
    <text>There are four nearly identical glyceraldehyde 3-phosphate dehydrogenases in Caenorhabditis elegans.</text>
</comment>
<comment type="similarity">
    <text evidence="3">Belongs to the glyceraldehyde-3-phosphate dehydrogenase family.</text>
</comment>
<gene>
    <name type="primary">gpd-2</name>
    <name type="ORF">K10B3.8</name>
</gene>
<name>G3P2_CAEEL</name>
<organism>
    <name type="scientific">Caenorhabditis elegans</name>
    <dbReference type="NCBI Taxonomy" id="6239"/>
    <lineage>
        <taxon>Eukaryota</taxon>
        <taxon>Metazoa</taxon>
        <taxon>Ecdysozoa</taxon>
        <taxon>Nematoda</taxon>
        <taxon>Chromadorea</taxon>
        <taxon>Rhabditida</taxon>
        <taxon>Rhabditina</taxon>
        <taxon>Rhabditomorpha</taxon>
        <taxon>Rhabditoidea</taxon>
        <taxon>Rhabditidae</taxon>
        <taxon>Peloderinae</taxon>
        <taxon>Caenorhabditis</taxon>
    </lineage>
</organism>
<proteinExistence type="inferred from homology"/>
<protein>
    <recommendedName>
        <fullName>Glyceraldehyde-3-phosphate dehydrogenase 2</fullName>
        <shortName>GAPDH-2</shortName>
        <ecNumber>1.2.1.12</ecNumber>
    </recommendedName>
</protein>
<reference key="1">
    <citation type="journal article" date="1989" name="J. Mol. Biol.">
        <title>Genomic organization of the glyceraldehyde-3-phosphate dehydrogenase gene family of Caenorhabditis elegans.</title>
        <authorList>
            <person name="Huang X.Y."/>
            <person name="Barrios L.A.M."/>
            <person name="Vonkhorporn P."/>
            <person name="Honda S."/>
            <person name="Albertson D.G."/>
            <person name="Hecht R.M."/>
        </authorList>
    </citation>
    <scope>NUCLEOTIDE SEQUENCE [GENOMIC DNA]</scope>
    <source>
        <strain>Bristol N2</strain>
    </source>
</reference>
<reference key="2">
    <citation type="journal article" date="1998" name="Science">
        <title>Genome sequence of the nematode C. elegans: a platform for investigating biology.</title>
        <authorList>
            <consortium name="The C. elegans sequencing consortium"/>
        </authorList>
    </citation>
    <scope>NUCLEOTIDE SEQUENCE [LARGE SCALE GENOMIC DNA]</scope>
    <source>
        <strain>Bristol N2</strain>
    </source>
</reference>
<sequence length="341" mass="36455">MPKPSVGINGFGRIGRLVLRAAVEKDSVNVVAVNDPFISIDYMVYLFQYDSTHGRFKGTVAHEGDYLLVAKEGKSQHKIKVYNSRDPAEIQWGASGADYVVESTGVFTTIEKANAHLKGGAKKVIISAPSADAPMFVVGVNHEKYDHANDHIISNASCTTNCLAPLAKVINDNFGIIEGLMTTVHAVTATQKTVDGPSGKLWRDGRGAGQNIIPASTGAAKAVGKVIPELNGKLTGMAFRVPTPDVSVVDLTARLEKPASLDDIKKVIKAAADGPMKGILAYTEDQVVSTDFVSDTNSSIFDAGASISLNPHFVKLVSWYDNEFGYSNRVVDLISYIATKA</sequence>